<sequence>MQVILLDKVANLGSLGDQVNVKAGYARNFLVPQGKAVPATKKNVEFFEARRAELEAKLADVLAAAEARATKINELVSVTISSKAGDEGKLFGSIGTRDIADAVTAAGVEVAKSEVRLPNGVLRTAGEHEVHFQVHSDVFAKLNVVVVPEA</sequence>
<keyword id="KW-0687">Ribonucleoprotein</keyword>
<keyword id="KW-0689">Ribosomal protein</keyword>
<keyword id="KW-0694">RNA-binding</keyword>
<keyword id="KW-0699">rRNA-binding</keyword>
<protein>
    <recommendedName>
        <fullName evidence="1">Large ribosomal subunit protein bL9</fullName>
    </recommendedName>
    <alternativeName>
        <fullName evidence="2">50S ribosomal protein L9</fullName>
    </alternativeName>
</protein>
<dbReference type="EMBL" id="CP000901">
    <property type="protein sequence ID" value="ABX87703.1"/>
    <property type="molecule type" value="Genomic_DNA"/>
</dbReference>
<dbReference type="RefSeq" id="WP_002210156.1">
    <property type="nucleotide sequence ID" value="NZ_CP009935.1"/>
</dbReference>
<dbReference type="SMR" id="A9QYL3"/>
<dbReference type="GeneID" id="57975178"/>
<dbReference type="KEGG" id="ypg:YpAngola_A0681"/>
<dbReference type="PATRIC" id="fig|349746.12.peg.1628"/>
<dbReference type="GO" id="GO:1990904">
    <property type="term" value="C:ribonucleoprotein complex"/>
    <property type="evidence" value="ECO:0007669"/>
    <property type="project" value="UniProtKB-KW"/>
</dbReference>
<dbReference type="GO" id="GO:0005840">
    <property type="term" value="C:ribosome"/>
    <property type="evidence" value="ECO:0007669"/>
    <property type="project" value="UniProtKB-KW"/>
</dbReference>
<dbReference type="GO" id="GO:0019843">
    <property type="term" value="F:rRNA binding"/>
    <property type="evidence" value="ECO:0007669"/>
    <property type="project" value="UniProtKB-UniRule"/>
</dbReference>
<dbReference type="GO" id="GO:0003735">
    <property type="term" value="F:structural constituent of ribosome"/>
    <property type="evidence" value="ECO:0007669"/>
    <property type="project" value="InterPro"/>
</dbReference>
<dbReference type="GO" id="GO:0006412">
    <property type="term" value="P:translation"/>
    <property type="evidence" value="ECO:0007669"/>
    <property type="project" value="UniProtKB-UniRule"/>
</dbReference>
<dbReference type="FunFam" id="3.10.430.100:FF:000001">
    <property type="entry name" value="50S ribosomal protein L9"/>
    <property type="match status" value="1"/>
</dbReference>
<dbReference type="FunFam" id="3.40.5.10:FF:000001">
    <property type="entry name" value="50S ribosomal protein L9"/>
    <property type="match status" value="1"/>
</dbReference>
<dbReference type="Gene3D" id="3.10.430.100">
    <property type="entry name" value="Ribosomal protein L9, C-terminal domain"/>
    <property type="match status" value="1"/>
</dbReference>
<dbReference type="Gene3D" id="3.40.5.10">
    <property type="entry name" value="Ribosomal protein L9, N-terminal domain"/>
    <property type="match status" value="1"/>
</dbReference>
<dbReference type="HAMAP" id="MF_00503">
    <property type="entry name" value="Ribosomal_bL9"/>
    <property type="match status" value="1"/>
</dbReference>
<dbReference type="InterPro" id="IPR000244">
    <property type="entry name" value="Ribosomal_bL9"/>
</dbReference>
<dbReference type="InterPro" id="IPR009027">
    <property type="entry name" value="Ribosomal_bL9/RNase_H1_N"/>
</dbReference>
<dbReference type="InterPro" id="IPR020594">
    <property type="entry name" value="Ribosomal_bL9_bac/chp"/>
</dbReference>
<dbReference type="InterPro" id="IPR020069">
    <property type="entry name" value="Ribosomal_bL9_C"/>
</dbReference>
<dbReference type="InterPro" id="IPR036791">
    <property type="entry name" value="Ribosomal_bL9_C_sf"/>
</dbReference>
<dbReference type="InterPro" id="IPR020070">
    <property type="entry name" value="Ribosomal_bL9_N"/>
</dbReference>
<dbReference type="InterPro" id="IPR036935">
    <property type="entry name" value="Ribosomal_bL9_N_sf"/>
</dbReference>
<dbReference type="NCBIfam" id="TIGR00158">
    <property type="entry name" value="L9"/>
    <property type="match status" value="1"/>
</dbReference>
<dbReference type="PANTHER" id="PTHR21368">
    <property type="entry name" value="50S RIBOSOMAL PROTEIN L9"/>
    <property type="match status" value="1"/>
</dbReference>
<dbReference type="Pfam" id="PF03948">
    <property type="entry name" value="Ribosomal_L9_C"/>
    <property type="match status" value="1"/>
</dbReference>
<dbReference type="Pfam" id="PF01281">
    <property type="entry name" value="Ribosomal_L9_N"/>
    <property type="match status" value="1"/>
</dbReference>
<dbReference type="SUPFAM" id="SSF55658">
    <property type="entry name" value="L9 N-domain-like"/>
    <property type="match status" value="1"/>
</dbReference>
<dbReference type="SUPFAM" id="SSF55653">
    <property type="entry name" value="Ribosomal protein L9 C-domain"/>
    <property type="match status" value="1"/>
</dbReference>
<dbReference type="PROSITE" id="PS00651">
    <property type="entry name" value="RIBOSOMAL_L9"/>
    <property type="match status" value="1"/>
</dbReference>
<reference key="1">
    <citation type="journal article" date="2010" name="J. Bacteriol.">
        <title>Genome sequence of the deep-rooted Yersinia pestis strain Angola reveals new insights into the evolution and pangenome of the plague bacterium.</title>
        <authorList>
            <person name="Eppinger M."/>
            <person name="Worsham P.L."/>
            <person name="Nikolich M.P."/>
            <person name="Riley D.R."/>
            <person name="Sebastian Y."/>
            <person name="Mou S."/>
            <person name="Achtman M."/>
            <person name="Lindler L.E."/>
            <person name="Ravel J."/>
        </authorList>
    </citation>
    <scope>NUCLEOTIDE SEQUENCE [LARGE SCALE GENOMIC DNA]</scope>
    <source>
        <strain>Angola</strain>
    </source>
</reference>
<proteinExistence type="inferred from homology"/>
<accession>A9QYL3</accession>
<evidence type="ECO:0000255" key="1">
    <source>
        <dbReference type="HAMAP-Rule" id="MF_00503"/>
    </source>
</evidence>
<evidence type="ECO:0000305" key="2"/>
<organism>
    <name type="scientific">Yersinia pestis bv. Antiqua (strain Angola)</name>
    <dbReference type="NCBI Taxonomy" id="349746"/>
    <lineage>
        <taxon>Bacteria</taxon>
        <taxon>Pseudomonadati</taxon>
        <taxon>Pseudomonadota</taxon>
        <taxon>Gammaproteobacteria</taxon>
        <taxon>Enterobacterales</taxon>
        <taxon>Yersiniaceae</taxon>
        <taxon>Yersinia</taxon>
    </lineage>
</organism>
<name>RL9_YERPG</name>
<feature type="chain" id="PRO_1000127000" description="Large ribosomal subunit protein bL9">
    <location>
        <begin position="1"/>
        <end position="150"/>
    </location>
</feature>
<gene>
    <name evidence="1" type="primary">rplI</name>
    <name type="ordered locus">YpAngola_A0681</name>
</gene>
<comment type="function">
    <text evidence="1">Binds to the 23S rRNA.</text>
</comment>
<comment type="similarity">
    <text evidence="1">Belongs to the bacterial ribosomal protein bL9 family.</text>
</comment>